<proteinExistence type="inferred from homology"/>
<name>FADB_ECOL6</name>
<organism>
    <name type="scientific">Escherichia coli O6:H1 (strain CFT073 / ATCC 700928 / UPEC)</name>
    <dbReference type="NCBI Taxonomy" id="199310"/>
    <lineage>
        <taxon>Bacteria</taxon>
        <taxon>Pseudomonadati</taxon>
        <taxon>Pseudomonadota</taxon>
        <taxon>Gammaproteobacteria</taxon>
        <taxon>Enterobacterales</taxon>
        <taxon>Enterobacteriaceae</taxon>
        <taxon>Escherichia</taxon>
    </lineage>
</organism>
<sequence>MLYKGDTLYLDWLEDGIAELVFDAPGSVNKLDTATVASLGEAIGVLEQQSDLKGLLLRSNKAAFIVGADITEFLSLFLVPEEQLSQWLHFANSVFNRLEDLPVPTIAAVNGYALGGGCECVLATDYRLATPDLRIGLPETKLGIMPGFGGSVRMPRMLGADSALEIIAAGKDVGADQALKIGLVDGVVKAEKLVEGAMAILRQAINGDLDWKAKRQPKLEPLKLSKIEAAMSFTIAKGMVAQTAGKHYPAPITAVKTIEAAARFGREEALNLENKSFVPLAHTNEARALVGIFLNDQYVKGKAKKLTKDVETPKQAAVLGAGIMGGGIAYQSAWKGVPVVMKDINDKSLTLGMTEAAKLLNKQLERGKIDGLKLAGVISTIHPTLDYAGFDRVDVVVEAVVENPKVKKAVLAETEQKVRPDTVLASNTSTIPISELANALERPENFCGMHFFNPVHRMPLVEIIRGEKSSDETIAKVVAWASKMGKTPIVVNDCPGFFVNRVLFPYFAGFSQLLRDGADFRKIDKVMEKQFGWPMGPAYLLDVVGIDTAHHAQAVMAAGFPQRMQKDYRDAIDALFNANRFGQKNGLGFWRYKEDSKGKPKKEEDVVVDDLLAKVSQPKRDFSEEEIIARMMIPMVNEVVRCLEEGIIATPAEADMALVYGLGFPPFHGGAFRWLDTLGSAKYLDMAQQYQHLGPLYEVPEGLRNKARHNEPYYPPVEPARPVGDLKTA</sequence>
<gene>
    <name evidence="1" type="primary">fadB</name>
    <name type="ordered locus">c4793</name>
</gene>
<keyword id="KW-0276">Fatty acid metabolism</keyword>
<keyword id="KW-0413">Isomerase</keyword>
<keyword id="KW-0442">Lipid degradation</keyword>
<keyword id="KW-0443">Lipid metabolism</keyword>
<keyword id="KW-0456">Lyase</keyword>
<keyword id="KW-0511">Multifunctional enzyme</keyword>
<keyword id="KW-0520">NAD</keyword>
<keyword id="KW-0560">Oxidoreductase</keyword>
<keyword id="KW-1185">Reference proteome</keyword>
<comment type="function">
    <text evidence="1">Involved in the aerobic and anaerobic degradation of long-chain fatty acids via beta-oxidation cycle. Catalyzes the formation of 3-oxoacyl-CoA from enoyl-CoA via L-3-hydroxyacyl-CoA. It can also use D-3-hydroxyacyl-CoA and cis-3-enoyl-CoA as substrate.</text>
</comment>
<comment type="catalytic activity">
    <reaction evidence="1">
        <text>a (3S)-3-hydroxyacyl-CoA + NAD(+) = a 3-oxoacyl-CoA + NADH + H(+)</text>
        <dbReference type="Rhea" id="RHEA:22432"/>
        <dbReference type="ChEBI" id="CHEBI:15378"/>
        <dbReference type="ChEBI" id="CHEBI:57318"/>
        <dbReference type="ChEBI" id="CHEBI:57540"/>
        <dbReference type="ChEBI" id="CHEBI:57945"/>
        <dbReference type="ChEBI" id="CHEBI:90726"/>
        <dbReference type="EC" id="1.1.1.35"/>
    </reaction>
</comment>
<comment type="catalytic activity">
    <reaction evidence="1">
        <text>a (3S)-3-hydroxyacyl-CoA = a (2E)-enoyl-CoA + H2O</text>
        <dbReference type="Rhea" id="RHEA:16105"/>
        <dbReference type="ChEBI" id="CHEBI:15377"/>
        <dbReference type="ChEBI" id="CHEBI:57318"/>
        <dbReference type="ChEBI" id="CHEBI:58856"/>
        <dbReference type="EC" id="4.2.1.17"/>
    </reaction>
</comment>
<comment type="catalytic activity">
    <reaction evidence="1">
        <text>a 4-saturated-(3S)-3-hydroxyacyl-CoA = a (3E)-enoyl-CoA + H2O</text>
        <dbReference type="Rhea" id="RHEA:20724"/>
        <dbReference type="ChEBI" id="CHEBI:15377"/>
        <dbReference type="ChEBI" id="CHEBI:58521"/>
        <dbReference type="ChEBI" id="CHEBI:137480"/>
        <dbReference type="EC" id="4.2.1.17"/>
    </reaction>
</comment>
<comment type="catalytic activity">
    <reaction evidence="1">
        <text>(3S)-3-hydroxybutanoyl-CoA = (3R)-3-hydroxybutanoyl-CoA</text>
        <dbReference type="Rhea" id="RHEA:21760"/>
        <dbReference type="ChEBI" id="CHEBI:57315"/>
        <dbReference type="ChEBI" id="CHEBI:57316"/>
        <dbReference type="EC" id="5.1.2.3"/>
    </reaction>
</comment>
<comment type="catalytic activity">
    <reaction evidence="1">
        <text>a (3Z)-enoyl-CoA = a 4-saturated (2E)-enoyl-CoA</text>
        <dbReference type="Rhea" id="RHEA:45900"/>
        <dbReference type="ChEBI" id="CHEBI:85097"/>
        <dbReference type="ChEBI" id="CHEBI:85489"/>
        <dbReference type="EC" id="5.3.3.8"/>
    </reaction>
</comment>
<comment type="catalytic activity">
    <reaction evidence="1">
        <text>a (3E)-enoyl-CoA = a 4-saturated (2E)-enoyl-CoA</text>
        <dbReference type="Rhea" id="RHEA:45228"/>
        <dbReference type="ChEBI" id="CHEBI:58521"/>
        <dbReference type="ChEBI" id="CHEBI:85097"/>
        <dbReference type="EC" id="5.3.3.8"/>
    </reaction>
</comment>
<comment type="pathway">
    <text evidence="1">Lipid metabolism; fatty acid beta-oxidation.</text>
</comment>
<comment type="subunit">
    <text evidence="1">Heterotetramer of two alpha chains (FadB) and two beta chains (FadA).</text>
</comment>
<comment type="similarity">
    <text evidence="1">In the N-terminal section; belongs to the enoyl-CoA hydratase/isomerase family.</text>
</comment>
<comment type="similarity">
    <text evidence="1">In the C-terminal section; belongs to the 3-hydroxyacyl-CoA dehydrogenase family.</text>
</comment>
<comment type="sequence caution" evidence="3">
    <conflict type="erroneous initiation">
        <sequence resource="EMBL-CDS" id="AAN83226"/>
    </conflict>
</comment>
<dbReference type="EC" id="4.2.1.17" evidence="1"/>
<dbReference type="EC" id="5.1.2.3" evidence="1"/>
<dbReference type="EC" id="5.3.3.8" evidence="1"/>
<dbReference type="EC" id="1.1.1.35" evidence="1"/>
<dbReference type="EMBL" id="AE014075">
    <property type="protein sequence ID" value="AAN83226.1"/>
    <property type="status" value="ALT_INIT"/>
    <property type="molecule type" value="Genomic_DNA"/>
</dbReference>
<dbReference type="RefSeq" id="WP_000965959.1">
    <property type="nucleotide sequence ID" value="NZ_CP051263.1"/>
</dbReference>
<dbReference type="SMR" id="Q8FBI2"/>
<dbReference type="STRING" id="199310.c4793"/>
<dbReference type="KEGG" id="ecc:c4793"/>
<dbReference type="eggNOG" id="COG1024">
    <property type="taxonomic scope" value="Bacteria"/>
</dbReference>
<dbReference type="eggNOG" id="COG1250">
    <property type="taxonomic scope" value="Bacteria"/>
</dbReference>
<dbReference type="HOGENOM" id="CLU_009834_16_3_6"/>
<dbReference type="UniPathway" id="UPA00659"/>
<dbReference type="Proteomes" id="UP000001410">
    <property type="component" value="Chromosome"/>
</dbReference>
<dbReference type="GO" id="GO:0036125">
    <property type="term" value="C:fatty acid beta-oxidation multienzyme complex"/>
    <property type="evidence" value="ECO:0007669"/>
    <property type="project" value="InterPro"/>
</dbReference>
<dbReference type="GO" id="GO:0008692">
    <property type="term" value="F:3-hydroxybutyryl-CoA epimerase activity"/>
    <property type="evidence" value="ECO:0007669"/>
    <property type="project" value="UniProtKB-UniRule"/>
</dbReference>
<dbReference type="GO" id="GO:0004165">
    <property type="term" value="F:delta(3)-delta(2)-enoyl-CoA isomerase activity"/>
    <property type="evidence" value="ECO:0007669"/>
    <property type="project" value="UniProtKB-UniRule"/>
</dbReference>
<dbReference type="GO" id="GO:0004300">
    <property type="term" value="F:enoyl-CoA hydratase activity"/>
    <property type="evidence" value="ECO:0007669"/>
    <property type="project" value="UniProtKB-UniRule"/>
</dbReference>
<dbReference type="GO" id="GO:0016509">
    <property type="term" value="F:long-chain-3-hydroxyacyl-CoA dehydrogenase activity"/>
    <property type="evidence" value="ECO:0007669"/>
    <property type="project" value="TreeGrafter"/>
</dbReference>
<dbReference type="GO" id="GO:0070403">
    <property type="term" value="F:NAD+ binding"/>
    <property type="evidence" value="ECO:0007669"/>
    <property type="project" value="InterPro"/>
</dbReference>
<dbReference type="GO" id="GO:0006635">
    <property type="term" value="P:fatty acid beta-oxidation"/>
    <property type="evidence" value="ECO:0007669"/>
    <property type="project" value="UniProtKB-UniRule"/>
</dbReference>
<dbReference type="CDD" id="cd06558">
    <property type="entry name" value="crotonase-like"/>
    <property type="match status" value="1"/>
</dbReference>
<dbReference type="FunFam" id="1.10.1040.50:FF:000001">
    <property type="entry name" value="Fatty acid oxidation complex subunit alpha"/>
    <property type="match status" value="1"/>
</dbReference>
<dbReference type="FunFam" id="3.90.226.10:FF:000018">
    <property type="entry name" value="Fatty acid oxidation complex subunit alpha"/>
    <property type="match status" value="1"/>
</dbReference>
<dbReference type="FunFam" id="3.40.50.720:FF:000009">
    <property type="entry name" value="Fatty oxidation complex, alpha subunit"/>
    <property type="match status" value="1"/>
</dbReference>
<dbReference type="Gene3D" id="1.10.1040.50">
    <property type="match status" value="1"/>
</dbReference>
<dbReference type="Gene3D" id="3.90.226.10">
    <property type="entry name" value="2-enoyl-CoA Hydratase, Chain A, domain 1"/>
    <property type="match status" value="1"/>
</dbReference>
<dbReference type="Gene3D" id="3.40.50.720">
    <property type="entry name" value="NAD(P)-binding Rossmann-like Domain"/>
    <property type="match status" value="1"/>
</dbReference>
<dbReference type="HAMAP" id="MF_01621">
    <property type="entry name" value="FadB"/>
    <property type="match status" value="1"/>
</dbReference>
<dbReference type="InterPro" id="IPR006180">
    <property type="entry name" value="3-OHacyl-CoA_DH_CS"/>
</dbReference>
<dbReference type="InterPro" id="IPR006176">
    <property type="entry name" value="3-OHacyl-CoA_DH_NAD-bd"/>
</dbReference>
<dbReference type="InterPro" id="IPR006108">
    <property type="entry name" value="3HC_DH_C"/>
</dbReference>
<dbReference type="InterPro" id="IPR008927">
    <property type="entry name" value="6-PGluconate_DH-like_C_sf"/>
</dbReference>
<dbReference type="InterPro" id="IPR029045">
    <property type="entry name" value="ClpP/crotonase-like_dom_sf"/>
</dbReference>
<dbReference type="InterPro" id="IPR018376">
    <property type="entry name" value="Enoyl-CoA_hyd/isom_CS"/>
</dbReference>
<dbReference type="InterPro" id="IPR001753">
    <property type="entry name" value="Enoyl-CoA_hydra/iso"/>
</dbReference>
<dbReference type="InterPro" id="IPR050136">
    <property type="entry name" value="FA_oxidation_alpha_subunit"/>
</dbReference>
<dbReference type="InterPro" id="IPR012799">
    <property type="entry name" value="FadB"/>
</dbReference>
<dbReference type="InterPro" id="IPR036291">
    <property type="entry name" value="NAD(P)-bd_dom_sf"/>
</dbReference>
<dbReference type="NCBIfam" id="TIGR02437">
    <property type="entry name" value="FadB"/>
    <property type="match status" value="1"/>
</dbReference>
<dbReference type="NCBIfam" id="NF008727">
    <property type="entry name" value="PRK11730.1"/>
    <property type="match status" value="1"/>
</dbReference>
<dbReference type="PANTHER" id="PTHR43612">
    <property type="entry name" value="TRIFUNCTIONAL ENZYME SUBUNIT ALPHA"/>
    <property type="match status" value="1"/>
</dbReference>
<dbReference type="PANTHER" id="PTHR43612:SF3">
    <property type="entry name" value="TRIFUNCTIONAL ENZYME SUBUNIT ALPHA, MITOCHONDRIAL"/>
    <property type="match status" value="1"/>
</dbReference>
<dbReference type="Pfam" id="PF00725">
    <property type="entry name" value="3HCDH"/>
    <property type="match status" value="2"/>
</dbReference>
<dbReference type="Pfam" id="PF02737">
    <property type="entry name" value="3HCDH_N"/>
    <property type="match status" value="1"/>
</dbReference>
<dbReference type="Pfam" id="PF00378">
    <property type="entry name" value="ECH_1"/>
    <property type="match status" value="1"/>
</dbReference>
<dbReference type="SUPFAM" id="SSF48179">
    <property type="entry name" value="6-phosphogluconate dehydrogenase C-terminal domain-like"/>
    <property type="match status" value="2"/>
</dbReference>
<dbReference type="SUPFAM" id="SSF52096">
    <property type="entry name" value="ClpP/crotonase"/>
    <property type="match status" value="1"/>
</dbReference>
<dbReference type="SUPFAM" id="SSF51735">
    <property type="entry name" value="NAD(P)-binding Rossmann-fold domains"/>
    <property type="match status" value="1"/>
</dbReference>
<dbReference type="PROSITE" id="PS00067">
    <property type="entry name" value="3HCDH"/>
    <property type="match status" value="1"/>
</dbReference>
<dbReference type="PROSITE" id="PS00166">
    <property type="entry name" value="ENOYL_COA_HYDRATASE"/>
    <property type="match status" value="1"/>
</dbReference>
<accession>Q8FBI2</accession>
<feature type="chain" id="PRO_0000109270" description="Fatty acid oxidation complex subunit alpha">
    <location>
        <begin position="1"/>
        <end position="729"/>
    </location>
</feature>
<feature type="region of interest" description="Enoyl-CoA hydratase/isomerase" evidence="1">
    <location>
        <begin position="1"/>
        <end position="189"/>
    </location>
</feature>
<feature type="region of interest" description="3-hydroxyacyl-CoA dehydrogenase" evidence="1">
    <location>
        <begin position="311"/>
        <end position="729"/>
    </location>
</feature>
<feature type="region of interest" description="Disordered" evidence="2">
    <location>
        <begin position="708"/>
        <end position="729"/>
    </location>
</feature>
<feature type="active site" description="For 3-hydroxyacyl-CoA dehydrogenase activity" evidence="1">
    <location>
        <position position="450"/>
    </location>
</feature>
<feature type="binding site" evidence="1">
    <location>
        <position position="296"/>
    </location>
    <ligand>
        <name>substrate</name>
    </ligand>
</feature>
<feature type="binding site" evidence="1">
    <location>
        <position position="324"/>
    </location>
    <ligand>
        <name>NAD(+)</name>
        <dbReference type="ChEBI" id="CHEBI:57540"/>
    </ligand>
</feature>
<feature type="binding site" evidence="1">
    <location>
        <position position="343"/>
    </location>
    <ligand>
        <name>NAD(+)</name>
        <dbReference type="ChEBI" id="CHEBI:57540"/>
    </ligand>
</feature>
<feature type="binding site" evidence="1">
    <location>
        <begin position="400"/>
        <end position="402"/>
    </location>
    <ligand>
        <name>NAD(+)</name>
        <dbReference type="ChEBI" id="CHEBI:57540"/>
    </ligand>
</feature>
<feature type="binding site" evidence="1">
    <location>
        <position position="407"/>
    </location>
    <ligand>
        <name>NAD(+)</name>
        <dbReference type="ChEBI" id="CHEBI:57540"/>
    </ligand>
</feature>
<feature type="binding site" evidence="1">
    <location>
        <position position="429"/>
    </location>
    <ligand>
        <name>NAD(+)</name>
        <dbReference type="ChEBI" id="CHEBI:57540"/>
    </ligand>
</feature>
<feature type="binding site" evidence="1">
    <location>
        <position position="453"/>
    </location>
    <ligand>
        <name>NAD(+)</name>
        <dbReference type="ChEBI" id="CHEBI:57540"/>
    </ligand>
</feature>
<feature type="binding site" evidence="1">
    <location>
        <position position="500"/>
    </location>
    <ligand>
        <name>substrate</name>
    </ligand>
</feature>
<feature type="binding site" evidence="1">
    <location>
        <position position="660"/>
    </location>
    <ligand>
        <name>substrate</name>
    </ligand>
</feature>
<feature type="site" description="Important for catalytic activity" evidence="1">
    <location>
        <position position="119"/>
    </location>
</feature>
<feature type="site" description="Important for catalytic activity" evidence="1">
    <location>
        <position position="139"/>
    </location>
</feature>
<protein>
    <recommendedName>
        <fullName evidence="1">Fatty acid oxidation complex subunit alpha</fullName>
    </recommendedName>
    <domain>
        <recommendedName>
            <fullName evidence="1">Enoyl-CoA hydratase/Delta(3)-cis-Delta(2)-trans-enoyl-CoA isomerase/3-hydroxybutyryl-CoA epimerase</fullName>
            <ecNumber evidence="1">4.2.1.17</ecNumber>
            <ecNumber evidence="1">5.1.2.3</ecNumber>
            <ecNumber evidence="1">5.3.3.8</ecNumber>
        </recommendedName>
    </domain>
    <domain>
        <recommendedName>
            <fullName evidence="1">3-hydroxyacyl-CoA dehydrogenase</fullName>
            <ecNumber evidence="1">1.1.1.35</ecNumber>
        </recommendedName>
    </domain>
</protein>
<reference key="1">
    <citation type="journal article" date="2002" name="Proc. Natl. Acad. Sci. U.S.A.">
        <title>Extensive mosaic structure revealed by the complete genome sequence of uropathogenic Escherichia coli.</title>
        <authorList>
            <person name="Welch R.A."/>
            <person name="Burland V."/>
            <person name="Plunkett G. III"/>
            <person name="Redford P."/>
            <person name="Roesch P."/>
            <person name="Rasko D."/>
            <person name="Buckles E.L."/>
            <person name="Liou S.-R."/>
            <person name="Boutin A."/>
            <person name="Hackett J."/>
            <person name="Stroud D."/>
            <person name="Mayhew G.F."/>
            <person name="Rose D.J."/>
            <person name="Zhou S."/>
            <person name="Schwartz D.C."/>
            <person name="Perna N.T."/>
            <person name="Mobley H.L.T."/>
            <person name="Donnenberg M.S."/>
            <person name="Blattner F.R."/>
        </authorList>
    </citation>
    <scope>NUCLEOTIDE SEQUENCE [LARGE SCALE GENOMIC DNA]</scope>
    <source>
        <strain>CFT073 / ATCC 700928 / UPEC</strain>
    </source>
</reference>
<evidence type="ECO:0000255" key="1">
    <source>
        <dbReference type="HAMAP-Rule" id="MF_01621"/>
    </source>
</evidence>
<evidence type="ECO:0000256" key="2">
    <source>
        <dbReference type="SAM" id="MobiDB-lite"/>
    </source>
</evidence>
<evidence type="ECO:0000305" key="3"/>